<reference key="1">
    <citation type="journal article" date="2008" name="PLoS ONE">
        <title>Genome sequence of the saprophyte Leptospira biflexa provides insights into the evolution of Leptospira and the pathogenesis of leptospirosis.</title>
        <authorList>
            <person name="Picardeau M."/>
            <person name="Bulach D.M."/>
            <person name="Bouchier C."/>
            <person name="Zuerner R.L."/>
            <person name="Zidane N."/>
            <person name="Wilson P.J."/>
            <person name="Creno S."/>
            <person name="Kuczek E.S."/>
            <person name="Bommezzadri S."/>
            <person name="Davis J.C."/>
            <person name="McGrath A."/>
            <person name="Johnson M.J."/>
            <person name="Boursaux-Eude C."/>
            <person name="Seemann T."/>
            <person name="Rouy Z."/>
            <person name="Coppel R.L."/>
            <person name="Rood J.I."/>
            <person name="Lajus A."/>
            <person name="Davies J.K."/>
            <person name="Medigue C."/>
            <person name="Adler B."/>
        </authorList>
    </citation>
    <scope>NUCLEOTIDE SEQUENCE [LARGE SCALE GENOMIC DNA]</scope>
    <source>
        <strain>Patoc 1 / Ames</strain>
    </source>
</reference>
<organism>
    <name type="scientific">Leptospira biflexa serovar Patoc (strain Patoc 1 / Ames)</name>
    <dbReference type="NCBI Taxonomy" id="355278"/>
    <lineage>
        <taxon>Bacteria</taxon>
        <taxon>Pseudomonadati</taxon>
        <taxon>Spirochaetota</taxon>
        <taxon>Spirochaetia</taxon>
        <taxon>Leptospirales</taxon>
        <taxon>Leptospiraceae</taxon>
        <taxon>Leptospira</taxon>
    </lineage>
</organism>
<protein>
    <recommendedName>
        <fullName evidence="1">Ribosome-recycling factor</fullName>
        <shortName evidence="1">RRF</shortName>
    </recommendedName>
    <alternativeName>
        <fullName evidence="1">Ribosome-releasing factor</fullName>
    </alternativeName>
</protein>
<comment type="function">
    <text evidence="1">Responsible for the release of ribosomes from messenger RNA at the termination of protein biosynthesis. May increase the efficiency of translation by recycling ribosomes from one round of translation to another.</text>
</comment>
<comment type="subcellular location">
    <subcellularLocation>
        <location evidence="1">Cytoplasm</location>
    </subcellularLocation>
</comment>
<comment type="similarity">
    <text evidence="1">Belongs to the RRF family.</text>
</comment>
<proteinExistence type="inferred from homology"/>
<feature type="chain" id="PRO_0000341016" description="Ribosome-recycling factor">
    <location>
        <begin position="1"/>
        <end position="183"/>
    </location>
</feature>
<feature type="region of interest" description="Disordered" evidence="2">
    <location>
        <begin position="134"/>
        <end position="156"/>
    </location>
</feature>
<accession>B0SDN4</accession>
<name>RRF_LEPBA</name>
<gene>
    <name evidence="1" type="primary">frr</name>
    <name type="ordered locus">LBF_2534</name>
</gene>
<evidence type="ECO:0000255" key="1">
    <source>
        <dbReference type="HAMAP-Rule" id="MF_00040"/>
    </source>
</evidence>
<evidence type="ECO:0000256" key="2">
    <source>
        <dbReference type="SAM" id="MobiDB-lite"/>
    </source>
</evidence>
<sequence>MVDEIIKSMQSKMDKTVDALKKDFGTIRTGKANPMMVEDVRVDYYGTLTPLNQLGKIACPEPRVILITPFEKGMLKDIEKAIFAASLGLTPNNDGSSIRINIPELTGERRKELAKVVKQKAEEKKVAIRNIRRDANDELKKHQSEMSQDEVKGHQDKIQKITDSYIAKLGDLEKEKEKEITTL</sequence>
<dbReference type="EMBL" id="CP000777">
    <property type="protein sequence ID" value="ABZ95018.1"/>
    <property type="molecule type" value="Genomic_DNA"/>
</dbReference>
<dbReference type="RefSeq" id="WP_012389553.1">
    <property type="nucleotide sequence ID" value="NC_010842.1"/>
</dbReference>
<dbReference type="SMR" id="B0SDN4"/>
<dbReference type="GeneID" id="93341986"/>
<dbReference type="KEGG" id="lbf:LBF_2534"/>
<dbReference type="HOGENOM" id="CLU_073981_2_0_12"/>
<dbReference type="GO" id="GO:0005737">
    <property type="term" value="C:cytoplasm"/>
    <property type="evidence" value="ECO:0007669"/>
    <property type="project" value="UniProtKB-SubCell"/>
</dbReference>
<dbReference type="GO" id="GO:0043023">
    <property type="term" value="F:ribosomal large subunit binding"/>
    <property type="evidence" value="ECO:0007669"/>
    <property type="project" value="TreeGrafter"/>
</dbReference>
<dbReference type="GO" id="GO:0006415">
    <property type="term" value="P:translational termination"/>
    <property type="evidence" value="ECO:0007669"/>
    <property type="project" value="UniProtKB-UniRule"/>
</dbReference>
<dbReference type="CDD" id="cd00520">
    <property type="entry name" value="RRF"/>
    <property type="match status" value="1"/>
</dbReference>
<dbReference type="FunFam" id="1.10.132.20:FF:000001">
    <property type="entry name" value="Ribosome-recycling factor"/>
    <property type="match status" value="1"/>
</dbReference>
<dbReference type="FunFam" id="3.30.1360.40:FF:000001">
    <property type="entry name" value="Ribosome-recycling factor"/>
    <property type="match status" value="1"/>
</dbReference>
<dbReference type="Gene3D" id="3.30.1360.40">
    <property type="match status" value="1"/>
</dbReference>
<dbReference type="Gene3D" id="1.10.132.20">
    <property type="entry name" value="Ribosome-recycling factor"/>
    <property type="match status" value="1"/>
</dbReference>
<dbReference type="HAMAP" id="MF_00040">
    <property type="entry name" value="RRF"/>
    <property type="match status" value="1"/>
</dbReference>
<dbReference type="InterPro" id="IPR002661">
    <property type="entry name" value="Ribosome_recyc_fac"/>
</dbReference>
<dbReference type="InterPro" id="IPR023584">
    <property type="entry name" value="Ribosome_recyc_fac_dom"/>
</dbReference>
<dbReference type="InterPro" id="IPR036191">
    <property type="entry name" value="RRF_sf"/>
</dbReference>
<dbReference type="NCBIfam" id="TIGR00496">
    <property type="entry name" value="frr"/>
    <property type="match status" value="1"/>
</dbReference>
<dbReference type="PANTHER" id="PTHR20982:SF3">
    <property type="entry name" value="MITOCHONDRIAL RIBOSOME RECYCLING FACTOR PSEUDO 1"/>
    <property type="match status" value="1"/>
</dbReference>
<dbReference type="PANTHER" id="PTHR20982">
    <property type="entry name" value="RIBOSOME RECYCLING FACTOR"/>
    <property type="match status" value="1"/>
</dbReference>
<dbReference type="Pfam" id="PF01765">
    <property type="entry name" value="RRF"/>
    <property type="match status" value="1"/>
</dbReference>
<dbReference type="SUPFAM" id="SSF55194">
    <property type="entry name" value="Ribosome recycling factor, RRF"/>
    <property type="match status" value="1"/>
</dbReference>
<keyword id="KW-0963">Cytoplasm</keyword>
<keyword id="KW-0648">Protein biosynthesis</keyword>